<evidence type="ECO:0000250" key="1"/>
<evidence type="ECO:0000256" key="2">
    <source>
        <dbReference type="SAM" id="MobiDB-lite"/>
    </source>
</evidence>
<evidence type="ECO:0000269" key="3">
    <source>
    </source>
</evidence>
<evidence type="ECO:0000305" key="4"/>
<evidence type="ECO:0000312" key="5">
    <source>
        <dbReference type="EMBL" id="AAR06361.1"/>
    </source>
</evidence>
<evidence type="ECO:0000312" key="6">
    <source>
        <dbReference type="EMBL" id="BAA84794.1"/>
    </source>
</evidence>
<evidence type="ECO:0000312" key="7">
    <source>
        <dbReference type="EMBL" id="BAF14856.1"/>
    </source>
</evidence>
<evidence type="ECO:0000312" key="8">
    <source>
        <dbReference type="EMBL" id="BAF18607.1"/>
    </source>
</evidence>
<evidence type="ECO:0000312" key="9">
    <source>
        <dbReference type="EMBL" id="BAS84518.1"/>
    </source>
</evidence>
<organism>
    <name type="scientific">Oryza sativa subsp. japonica</name>
    <name type="common">Rice</name>
    <dbReference type="NCBI Taxonomy" id="39947"/>
    <lineage>
        <taxon>Eukaryota</taxon>
        <taxon>Viridiplantae</taxon>
        <taxon>Streptophyta</taxon>
        <taxon>Embryophyta</taxon>
        <taxon>Tracheophyta</taxon>
        <taxon>Spermatophyta</taxon>
        <taxon>Magnoliopsida</taxon>
        <taxon>Liliopsida</taxon>
        <taxon>Poales</taxon>
        <taxon>Poaceae</taxon>
        <taxon>BOP clade</taxon>
        <taxon>Oryzoideae</taxon>
        <taxon>Oryzeae</taxon>
        <taxon>Oryzinae</taxon>
        <taxon>Oryza</taxon>
        <taxon>Oryza sativa</taxon>
    </lineage>
</organism>
<comment type="function">
    <text>Variant histone H3 which replaces conventional H3 in a wide range of nucleosomes in active genes. Constitutes the predominant form of histone H3 in non-dividing cells and is incorporated into chromatin independently of DNA synthesis. Deposited at sites of nucleosomal displacement throughout transcribed genes, suggesting that it represents an epigenetic imprint of transcriptionally active chromatin. Nucleosomes wrap and compact DNA into chromatin, limiting DNA accessibility to the cellular machineries which require DNA as a template. Histones thereby play a central role in transcription regulation, DNA repair, DNA replication and chromosomal stability. DNA accessibility is regulated via a complex set of post-translational modifications of histones, also called histone code, and nucleosome remodeling.</text>
</comment>
<comment type="subunit">
    <text>The nucleosome is a histone octamer containing two molecules each of H2A, H2B, H3 and H4 assembled in one H3-H4 heterotetramer and two H2A-H2B heterodimers. The octamer wraps approximately 147 bp of DNA.</text>
</comment>
<comment type="interaction">
    <interactant intactId="EBI-7896995">
        <id>Q0JCT1</id>
    </interactant>
    <interactant intactId="EBI-7896966">
        <id>Q6L4L4</id>
        <label>SIZ1</label>
    </interactant>
    <organismsDiffer>false</organismsDiffer>
    <experiments>5</experiments>
</comment>
<comment type="subcellular location">
    <subcellularLocation>
        <location evidence="1">Nucleus</location>
    </subcellularLocation>
    <subcellularLocation>
        <location evidence="1">Chromosome</location>
    </subcellularLocation>
</comment>
<comment type="induction">
    <text evidence="3">Up-regulated by salt stress and abscisic acid.</text>
</comment>
<comment type="PTM">
    <text evidence="1">Acetylation is generally linked to gene activation. Can be acetylated to form H3K9ac, H3K14ac, H3K18ac and H3K23ac. H3K9ac could compete with H3K9me and prevent gene silencing. H3K9ac is restricted to euchromatin (By similarity).</text>
</comment>
<comment type="PTM">
    <text evidence="1">Methylated to form mainly H3K4me, H3K9me, H3K18me, H3K23me, H3K27me and H3K36me. H3K4me1/2/3, H3K9me3, H3K27me3 and H3K36me1/2/3 are typical marks for euchromatin, whereas heterochromatic chromocenters are enriched in H3K9me1/2 and H3K27me1/2. H2BK143ub1 is probably prerequisite for H3K4me (By similarity).</text>
</comment>
<comment type="PTM">
    <text evidence="1">Can be phosphorylated to form H3S10ph, H3T11ph and H3S28ph.</text>
</comment>
<comment type="similarity">
    <text evidence="4">Belongs to the histone H3 family.</text>
</comment>
<comment type="caution">
    <text evidence="4">To ensure consistency between histone entries, we follow the 'Brno' nomenclature for histone modifications, with positions referring to those used in the literature for the 'closest' model organism. Due to slight variations in histone sequences between organisms and to the presence of initiator methionine in UniProtKB/Swiss-Prot sequences, the actual positions of modified amino acids in the sequence generally differ. In this entry the following conventions are used: H3K4me = methylated Lys-5; H3K9ac = acetylated Lys-10; H3K9me = methylated Lys-10; H3S10ph = phosphorylated Ser-11; H3T11ph = phosphorylated Thr-12; H3K14ac = acetylated Lys-15; H3K18ac = acetylated Lys-19; H3K18me = methylated Lys-19; H3K23ac = acetylated Lys-24; H3K23me = methylated Lys-24; H3K27me = methylated Lys-28; H3S28ph = phosphorylated Ser-29; H3K36me = methylated Lys-37.</text>
</comment>
<comment type="sequence caution" evidence="4">
    <conflict type="erroneous gene model prediction">
        <sequence resource="EMBL-CDS" id="BAF14856"/>
    </conflict>
</comment>
<name>H33_ORYSJ</name>
<accession>Q0JCT1</accession>
<accession>Q71UF0</accession>
<accession>Q7F8L1</accession>
<accession>Q8SA80</accession>
<reference key="1">
    <citation type="submission" date="1998-09" db="EMBL/GenBank/DDBJ databases">
        <title>Molecular cloning and characterization of histone H3 in rice.</title>
        <authorList>
            <person name="Lee J.-S."/>
        </authorList>
    </citation>
    <scope>NUCLEOTIDE SEQUENCE [MRNA]</scope>
    <source>
        <strain>cv. Ilpoom</strain>
        <tissue>Leaf</tissue>
    </source>
</reference>
<reference key="2">
    <citation type="submission" date="2002-01" db="EMBL/GenBank/DDBJ databases">
        <title>Oryza sativa disease-resistent-related protein (RH3) mRNA.</title>
        <authorList>
            <person name="Xiong A."/>
            <person name="Yao Q."/>
            <person name="Peng R."/>
            <person name="Li X."/>
            <person name="Fan H."/>
        </authorList>
    </citation>
    <scope>NUCLEOTIDE SEQUENCE [MRNA]</scope>
</reference>
<reference key="3">
    <citation type="journal article" date="2006" name="Yi Chuan Xue Bao">
        <title>Salt induces expression of RH3.2A, encoding an H3.2-type histone H3 protein in rice (Oryza sativa L.).</title>
        <authorList>
            <person name="Qiu S.-P."/>
            <person name="Huang J."/>
            <person name="Pan L.-J."/>
            <person name="Wang M.-M."/>
            <person name="Zhang H.-S."/>
        </authorList>
    </citation>
    <scope>NUCLEOTIDE SEQUENCE [MRNA]</scope>
    <scope>INDUCTION</scope>
    <source>
        <strain>cv. Jiu Caiqing</strain>
        <tissue>Leaf</tissue>
    </source>
</reference>
<reference key="4">
    <citation type="journal article" date="2005" name="Genome Res.">
        <title>Sequence, annotation, and analysis of synteny between rice chromosome 3 and diverged grass species.</title>
        <authorList>
            <consortium name="The rice chromosome 3 sequencing consortium"/>
            <person name="Buell C.R."/>
            <person name="Yuan Q."/>
            <person name="Ouyang S."/>
            <person name="Liu J."/>
            <person name="Zhu W."/>
            <person name="Wang A."/>
            <person name="Maiti R."/>
            <person name="Haas B."/>
            <person name="Wortman J."/>
            <person name="Pertea M."/>
            <person name="Jones K.M."/>
            <person name="Kim M."/>
            <person name="Overton L."/>
            <person name="Tsitrin T."/>
            <person name="Fadrosh D."/>
            <person name="Bera J."/>
            <person name="Weaver B."/>
            <person name="Jin S."/>
            <person name="Johri S."/>
            <person name="Reardon M."/>
            <person name="Webb K."/>
            <person name="Hill J."/>
            <person name="Moffat K."/>
            <person name="Tallon L."/>
            <person name="Van Aken S."/>
            <person name="Lewis M."/>
            <person name="Utterback T."/>
            <person name="Feldblyum T."/>
            <person name="Zismann V."/>
            <person name="Iobst S."/>
            <person name="Hsiao J."/>
            <person name="de Vazeille A.R."/>
            <person name="Salzberg S.L."/>
            <person name="White O."/>
            <person name="Fraser C.M."/>
            <person name="Yu Y."/>
            <person name="Kim H."/>
            <person name="Rambo T."/>
            <person name="Currie J."/>
            <person name="Collura K."/>
            <person name="Kernodle-Thompson S."/>
            <person name="Wei F."/>
            <person name="Kudrna K."/>
            <person name="Ammiraju J.S.S."/>
            <person name="Luo M."/>
            <person name="Goicoechea J.L."/>
            <person name="Wing R.A."/>
            <person name="Henry D."/>
            <person name="Oates R."/>
            <person name="Palmer M."/>
            <person name="Pries G."/>
            <person name="Saski C."/>
            <person name="Simmons J."/>
            <person name="Soderlund C."/>
            <person name="Nelson W."/>
            <person name="de la Bastide M."/>
            <person name="Spiegel L."/>
            <person name="Nascimento L."/>
            <person name="Huang E."/>
            <person name="Preston R."/>
            <person name="Zutavern T."/>
            <person name="Palmer L."/>
            <person name="O'Shaughnessy A."/>
            <person name="Dike S."/>
            <person name="McCombie W.R."/>
            <person name="Minx P."/>
            <person name="Cordum H."/>
            <person name="Wilson R."/>
            <person name="Jin W."/>
            <person name="Lee H.R."/>
            <person name="Jiang J."/>
            <person name="Jackson S."/>
        </authorList>
    </citation>
    <scope>NUCLEOTIDE SEQUENCE [LARGE SCALE GENOMIC DNA]</scope>
    <source>
        <strain>cv. Nipponbare</strain>
    </source>
</reference>
<reference key="5">
    <citation type="journal article" date="2005" name="Nature">
        <title>The map-based sequence of the rice genome.</title>
        <authorList>
            <consortium name="International rice genome sequencing project (IRGSP)"/>
        </authorList>
    </citation>
    <scope>NUCLEOTIDE SEQUENCE [LARGE SCALE GENOMIC DNA]</scope>
    <source>
        <strain>cv. Nipponbare</strain>
    </source>
</reference>
<reference key="6">
    <citation type="journal article" date="2008" name="Nucleic Acids Res.">
        <title>The rice annotation project database (RAP-DB): 2008 update.</title>
        <authorList>
            <consortium name="The rice annotation project (RAP)"/>
        </authorList>
    </citation>
    <scope>GENOME REANNOTATION</scope>
    <source>
        <strain>cv. Nipponbare</strain>
    </source>
</reference>
<reference key="7">
    <citation type="journal article" date="2013" name="Rice">
        <title>Improvement of the Oryza sativa Nipponbare reference genome using next generation sequence and optical map data.</title>
        <authorList>
            <person name="Kawahara Y."/>
            <person name="de la Bastide M."/>
            <person name="Hamilton J.P."/>
            <person name="Kanamori H."/>
            <person name="McCombie W.R."/>
            <person name="Ouyang S."/>
            <person name="Schwartz D.C."/>
            <person name="Tanaka T."/>
            <person name="Wu J."/>
            <person name="Zhou S."/>
            <person name="Childs K.L."/>
            <person name="Davidson R.M."/>
            <person name="Lin H."/>
            <person name="Quesada-Ocampo L."/>
            <person name="Vaillancourt B."/>
            <person name="Sakai H."/>
            <person name="Lee S.S."/>
            <person name="Kim J."/>
            <person name="Numa H."/>
            <person name="Itoh T."/>
            <person name="Buell C.R."/>
            <person name="Matsumoto T."/>
        </authorList>
    </citation>
    <scope>GENOME REANNOTATION</scope>
    <source>
        <strain>cv. Nipponbare</strain>
    </source>
</reference>
<dbReference type="EMBL" id="AF093633">
    <property type="protein sequence ID" value="AAC78105.1"/>
    <property type="molecule type" value="mRNA"/>
</dbReference>
<dbReference type="EMBL" id="AF467728">
    <property type="protein sequence ID" value="AAL78367.1"/>
    <property type="molecule type" value="mRNA"/>
</dbReference>
<dbReference type="EMBL" id="AY525328">
    <property type="protein sequence ID" value="AAS19511.1"/>
    <property type="molecule type" value="mRNA"/>
</dbReference>
<dbReference type="EMBL" id="AC092075">
    <property type="protein sequence ID" value="AAR06361.1"/>
    <property type="molecule type" value="Genomic_DNA"/>
</dbReference>
<dbReference type="EMBL" id="DP000009">
    <property type="protein sequence ID" value="ABF96358.1"/>
    <property type="molecule type" value="Genomic_DNA"/>
</dbReference>
<dbReference type="EMBL" id="AP000559">
    <property type="protein sequence ID" value="BAA84794.1"/>
    <property type="molecule type" value="Genomic_DNA"/>
</dbReference>
<dbReference type="EMBL" id="AP008209">
    <property type="protein sequence ID" value="BAF12190.1"/>
    <property type="molecule type" value="Genomic_DNA"/>
</dbReference>
<dbReference type="EMBL" id="AP008210">
    <property type="protein sequence ID" value="BAF14856.1"/>
    <property type="status" value="ALT_SEQ"/>
    <property type="molecule type" value="Genomic_DNA"/>
</dbReference>
<dbReference type="EMBL" id="AP008212">
    <property type="protein sequence ID" value="BAF18607.1"/>
    <property type="molecule type" value="Genomic_DNA"/>
</dbReference>
<dbReference type="EMBL" id="AP014959">
    <property type="protein sequence ID" value="BAS84518.1"/>
    <property type="molecule type" value="Genomic_DNA"/>
</dbReference>
<dbReference type="EMBL" id="AP014960">
    <property type="status" value="NOT_ANNOTATED_CDS"/>
    <property type="molecule type" value="Genomic_DNA"/>
</dbReference>
<dbReference type="EMBL" id="AP014962">
    <property type="status" value="NOT_ANNOTATED_CDS"/>
    <property type="molecule type" value="Genomic_DNA"/>
</dbReference>
<dbReference type="SMR" id="Q0JCT1"/>
<dbReference type="FunCoup" id="Q0JCT1">
    <property type="interactions" value="1926"/>
</dbReference>
<dbReference type="IntAct" id="Q0JCT1">
    <property type="interactions" value="1"/>
</dbReference>
<dbReference type="MINT" id="Q0JCT1"/>
<dbReference type="STRING" id="39947.Q0JCT1"/>
<dbReference type="iPTMnet" id="Q0JCT1"/>
<dbReference type="PaxDb" id="39947-Q0JCT1"/>
<dbReference type="EnsemblPlants" id="Os03t0390600-02">
    <property type="protein sequence ID" value="Os03t0390600-02"/>
    <property type="gene ID" value="Os03g0390600"/>
</dbReference>
<dbReference type="Gramene" id="Os03t0390600-02">
    <property type="protein sequence ID" value="Os03t0390600-02"/>
    <property type="gene ID" value="Os03g0390600"/>
</dbReference>
<dbReference type="KEGG" id="dosa:Os03g0390600"/>
<dbReference type="KEGG" id="dosa:Os04g0450800"/>
<dbReference type="KEGG" id="dosa:Os06g0130900"/>
<dbReference type="KEGG" id="osa:4333019"/>
<dbReference type="KEGG" id="osa:4340006"/>
<dbReference type="eggNOG" id="KOG1745">
    <property type="taxonomic scope" value="Eukaryota"/>
</dbReference>
<dbReference type="HOGENOM" id="CLU_078295_4_0_1"/>
<dbReference type="InParanoid" id="Q0JCT1"/>
<dbReference type="OMA" id="HIFAEMA"/>
<dbReference type="Proteomes" id="UP000000763">
    <property type="component" value="Chromosome 3"/>
</dbReference>
<dbReference type="Proteomes" id="UP000000763">
    <property type="component" value="Chromosome 4"/>
</dbReference>
<dbReference type="Proteomes" id="UP000000763">
    <property type="component" value="Chromosome 6"/>
</dbReference>
<dbReference type="Proteomes" id="UP000059680">
    <property type="component" value="Chromosome 3"/>
</dbReference>
<dbReference type="Proteomes" id="UP000059680">
    <property type="component" value="Chromosome 4"/>
</dbReference>
<dbReference type="Proteomes" id="UP000059680">
    <property type="component" value="Chromosome 6"/>
</dbReference>
<dbReference type="ExpressionAtlas" id="Q0JCT1">
    <property type="expression patterns" value="baseline and differential"/>
</dbReference>
<dbReference type="GO" id="GO:0000786">
    <property type="term" value="C:nucleosome"/>
    <property type="evidence" value="ECO:0007669"/>
    <property type="project" value="UniProtKB-KW"/>
</dbReference>
<dbReference type="GO" id="GO:0005634">
    <property type="term" value="C:nucleus"/>
    <property type="evidence" value="ECO:0000318"/>
    <property type="project" value="GO_Central"/>
</dbReference>
<dbReference type="GO" id="GO:0003677">
    <property type="term" value="F:DNA binding"/>
    <property type="evidence" value="ECO:0007669"/>
    <property type="project" value="UniProtKB-KW"/>
</dbReference>
<dbReference type="GO" id="GO:0046982">
    <property type="term" value="F:protein heterodimerization activity"/>
    <property type="evidence" value="ECO:0007669"/>
    <property type="project" value="InterPro"/>
</dbReference>
<dbReference type="GO" id="GO:0030527">
    <property type="term" value="F:structural constituent of chromatin"/>
    <property type="evidence" value="ECO:0007669"/>
    <property type="project" value="InterPro"/>
</dbReference>
<dbReference type="CDD" id="cd22911">
    <property type="entry name" value="HFD_H3"/>
    <property type="match status" value="1"/>
</dbReference>
<dbReference type="FunFam" id="1.10.20.10:FF:000078">
    <property type="entry name" value="Histone H3"/>
    <property type="match status" value="1"/>
</dbReference>
<dbReference type="FunFam" id="1.10.20.10:FF:000044">
    <property type="entry name" value="Histone H3.3"/>
    <property type="match status" value="1"/>
</dbReference>
<dbReference type="Gene3D" id="1.10.20.10">
    <property type="entry name" value="Histone, subunit A"/>
    <property type="match status" value="1"/>
</dbReference>
<dbReference type="InterPro" id="IPR009072">
    <property type="entry name" value="Histone-fold"/>
</dbReference>
<dbReference type="InterPro" id="IPR007125">
    <property type="entry name" value="Histone_H2A/H2B/H3"/>
</dbReference>
<dbReference type="InterPro" id="IPR000164">
    <property type="entry name" value="Histone_H3/CENP-A"/>
</dbReference>
<dbReference type="PANTHER" id="PTHR11426">
    <property type="entry name" value="HISTONE H3"/>
    <property type="match status" value="1"/>
</dbReference>
<dbReference type="Pfam" id="PF00125">
    <property type="entry name" value="Histone"/>
    <property type="match status" value="1"/>
</dbReference>
<dbReference type="PRINTS" id="PR00622">
    <property type="entry name" value="HISTONEH3"/>
</dbReference>
<dbReference type="SMART" id="SM00428">
    <property type="entry name" value="H3"/>
    <property type="match status" value="1"/>
</dbReference>
<dbReference type="SUPFAM" id="SSF47113">
    <property type="entry name" value="Histone-fold"/>
    <property type="match status" value="1"/>
</dbReference>
<dbReference type="PROSITE" id="PS00322">
    <property type="entry name" value="HISTONE_H3_1"/>
    <property type="match status" value="1"/>
</dbReference>
<dbReference type="PROSITE" id="PS00959">
    <property type="entry name" value="HISTONE_H3_2"/>
    <property type="match status" value="1"/>
</dbReference>
<feature type="initiator methionine" description="Removed" evidence="1">
    <location>
        <position position="1"/>
    </location>
</feature>
<feature type="chain" id="PRO_0000263052" description="Histone H3.3">
    <location>
        <begin position="2"/>
        <end position="136"/>
    </location>
</feature>
<feature type="region of interest" description="Disordered" evidence="2">
    <location>
        <begin position="1"/>
        <end position="43"/>
    </location>
</feature>
<feature type="modified residue" description="N6-methylated lysine" evidence="1">
    <location>
        <position position="5"/>
    </location>
</feature>
<feature type="modified residue" description="N6-acetyllysine; alternate" evidence="1">
    <location>
        <position position="10"/>
    </location>
</feature>
<feature type="modified residue" description="N6-methylated lysine; alternate" evidence="1">
    <location>
        <position position="10"/>
    </location>
</feature>
<feature type="modified residue" description="Phosphoserine" evidence="1">
    <location>
        <position position="11"/>
    </location>
</feature>
<feature type="modified residue" description="Phosphothreonine" evidence="1">
    <location>
        <position position="12"/>
    </location>
</feature>
<feature type="modified residue" description="N6-acetyllysine" evidence="1">
    <location>
        <position position="15"/>
    </location>
</feature>
<feature type="modified residue" description="N6-acetyllysine; alternate" evidence="1">
    <location>
        <position position="19"/>
    </location>
</feature>
<feature type="modified residue" description="N6-methylated lysine; alternate" evidence="1">
    <location>
        <position position="19"/>
    </location>
</feature>
<feature type="modified residue" description="N6-acetyllysine; alternate" evidence="1">
    <location>
        <position position="24"/>
    </location>
</feature>
<feature type="modified residue" description="N6-methylated lysine; alternate" evidence="1">
    <location>
        <position position="24"/>
    </location>
</feature>
<feature type="modified residue" description="N6-methylated lysine" evidence="1">
    <location>
        <position position="28"/>
    </location>
</feature>
<feature type="modified residue" description="Phosphoserine" evidence="1">
    <location>
        <position position="29"/>
    </location>
</feature>
<feature type="modified residue" description="N6-methylated lysine; alternate" evidence="1">
    <location>
        <position position="37"/>
    </location>
</feature>
<feature type="sequence conflict" description="In Ref. 2; AAL78367." evidence="4" ref="2">
    <original>Q</original>
    <variation>K</variation>
    <location>
        <position position="126"/>
    </location>
</feature>
<sequence length="136" mass="15406">MARTKQTARKSTGGKAPRKQLATKAARKSAPTTGGVKKPHRYRPGTVALREIRKYQKSTELLIRKLPFQRLVREIAQDFKTDLRFQSHAVLALQEAAEAYLVGLFEDTNLCAIHAKRVTIMPKDIQLARRIRGERA</sequence>
<gene>
    <name type="primary">H3</name>
    <name type="synonym">RH3</name>
    <name type="synonym">RH3.2A</name>
    <name evidence="9" type="ordered locus">Os03g0390600</name>
    <name evidence="4" type="ordered locus">LOC_Os03g27310</name>
    <name evidence="5" type="ORF">OSJNBa0017N12.5</name>
</gene>
<gene>
    <name evidence="7" type="ordered locus">Os04g0450800</name>
    <name evidence="4" type="ordered locus">LOC_Os04g37780</name>
</gene>
<gene>
    <name evidence="8" type="ordered locus">Os06g0130900</name>
    <name evidence="4" type="ordered locus">LOC_Os06g04030</name>
    <name evidence="6" type="ORF">P0493C11.10</name>
</gene>
<proteinExistence type="evidence at protein level"/>
<protein>
    <recommendedName>
        <fullName>Histone H3.3</fullName>
    </recommendedName>
    <alternativeName>
        <fullName>H3.2</fullName>
    </alternativeName>
</protein>
<keyword id="KW-0007">Acetylation</keyword>
<keyword id="KW-0158">Chromosome</keyword>
<keyword id="KW-0238">DNA-binding</keyword>
<keyword id="KW-0488">Methylation</keyword>
<keyword id="KW-0544">Nucleosome core</keyword>
<keyword id="KW-0539">Nucleus</keyword>
<keyword id="KW-0597">Phosphoprotein</keyword>
<keyword id="KW-1185">Reference proteome</keyword>